<proteinExistence type="inferred from homology"/>
<evidence type="ECO:0000250" key="1"/>
<evidence type="ECO:0000255" key="2">
    <source>
        <dbReference type="HAMAP-Rule" id="MF_01395"/>
    </source>
</evidence>
<evidence type="ECO:0000255" key="3">
    <source>
        <dbReference type="PROSITE-ProRule" id="PRU01136"/>
    </source>
</evidence>
<evidence type="ECO:0000256" key="4">
    <source>
        <dbReference type="SAM" id="MobiDB-lite"/>
    </source>
</evidence>
<keyword id="KW-0067">ATP-binding</keyword>
<keyword id="KW-0150">Chloroplast</keyword>
<keyword id="KW-0275">Fatty acid biosynthesis</keyword>
<keyword id="KW-0276">Fatty acid metabolism</keyword>
<keyword id="KW-0444">Lipid biosynthesis</keyword>
<keyword id="KW-0443">Lipid metabolism</keyword>
<keyword id="KW-0479">Metal-binding</keyword>
<keyword id="KW-0547">Nucleotide-binding</keyword>
<keyword id="KW-0934">Plastid</keyword>
<keyword id="KW-0808">Transferase</keyword>
<keyword id="KW-0862">Zinc</keyword>
<keyword id="KW-0863">Zinc-finger</keyword>
<geneLocation type="chloroplast"/>
<dbReference type="EC" id="2.1.3.15" evidence="2"/>
<dbReference type="EMBL" id="DQ383815">
    <property type="protein sequence ID" value="ABD47155.1"/>
    <property type="molecule type" value="Genomic_DNA"/>
</dbReference>
<dbReference type="RefSeq" id="YP_588126.1">
    <property type="nucleotide sequence ID" value="NC_007977.1"/>
</dbReference>
<dbReference type="SMR" id="Q1KXV0"/>
<dbReference type="EnsemblPlants" id="mRNA:HanXRQr2_Chr02g0061561">
    <property type="protein sequence ID" value="CDS:HanXRQr2_Chr02g0061561.1"/>
    <property type="gene ID" value="HanXRQr2_Chr02g0061561"/>
</dbReference>
<dbReference type="GeneID" id="4055710"/>
<dbReference type="Gramene" id="mRNA:HanXRQr2_Chr02g0061561">
    <property type="protein sequence ID" value="CDS:HanXRQr2_Chr02g0061561.1"/>
    <property type="gene ID" value="HanXRQr2_Chr02g0061561"/>
</dbReference>
<dbReference type="KEGG" id="han:4055710"/>
<dbReference type="OMA" id="NCGCHLK"/>
<dbReference type="OrthoDB" id="10053020at2759"/>
<dbReference type="PhylomeDB" id="Q1KXV0"/>
<dbReference type="UniPathway" id="UPA00655">
    <property type="reaction ID" value="UER00711"/>
</dbReference>
<dbReference type="GO" id="GO:0009317">
    <property type="term" value="C:acetyl-CoA carboxylase complex"/>
    <property type="evidence" value="ECO:0007669"/>
    <property type="project" value="InterPro"/>
</dbReference>
<dbReference type="GO" id="GO:0009570">
    <property type="term" value="C:chloroplast stroma"/>
    <property type="evidence" value="ECO:0007669"/>
    <property type="project" value="UniProtKB-SubCell"/>
</dbReference>
<dbReference type="GO" id="GO:0003989">
    <property type="term" value="F:acetyl-CoA carboxylase activity"/>
    <property type="evidence" value="ECO:0007669"/>
    <property type="project" value="InterPro"/>
</dbReference>
<dbReference type="GO" id="GO:0005524">
    <property type="term" value="F:ATP binding"/>
    <property type="evidence" value="ECO:0007669"/>
    <property type="project" value="UniProtKB-KW"/>
</dbReference>
<dbReference type="GO" id="GO:0016743">
    <property type="term" value="F:carboxyl- or carbamoyltransferase activity"/>
    <property type="evidence" value="ECO:0007669"/>
    <property type="project" value="UniProtKB-UniRule"/>
</dbReference>
<dbReference type="GO" id="GO:0008270">
    <property type="term" value="F:zinc ion binding"/>
    <property type="evidence" value="ECO:0007669"/>
    <property type="project" value="UniProtKB-UniRule"/>
</dbReference>
<dbReference type="GO" id="GO:0006633">
    <property type="term" value="P:fatty acid biosynthetic process"/>
    <property type="evidence" value="ECO:0007669"/>
    <property type="project" value="UniProtKB-KW"/>
</dbReference>
<dbReference type="GO" id="GO:2001295">
    <property type="term" value="P:malonyl-CoA biosynthetic process"/>
    <property type="evidence" value="ECO:0007669"/>
    <property type="project" value="UniProtKB-UniRule"/>
</dbReference>
<dbReference type="Gene3D" id="3.90.226.10">
    <property type="entry name" value="2-enoyl-CoA Hydratase, Chain A, domain 1"/>
    <property type="match status" value="1"/>
</dbReference>
<dbReference type="HAMAP" id="MF_01395">
    <property type="entry name" value="AcetylCoA_CT_beta"/>
    <property type="match status" value="1"/>
</dbReference>
<dbReference type="InterPro" id="IPR034733">
    <property type="entry name" value="AcCoA_carboxyl_beta"/>
</dbReference>
<dbReference type="InterPro" id="IPR000438">
    <property type="entry name" value="Acetyl_CoA_COase_Trfase_b_su"/>
</dbReference>
<dbReference type="InterPro" id="IPR029045">
    <property type="entry name" value="ClpP/crotonase-like_dom_sf"/>
</dbReference>
<dbReference type="InterPro" id="IPR011762">
    <property type="entry name" value="COA_CT_N"/>
</dbReference>
<dbReference type="NCBIfam" id="TIGR00515">
    <property type="entry name" value="accD"/>
    <property type="match status" value="1"/>
</dbReference>
<dbReference type="PANTHER" id="PTHR42995">
    <property type="entry name" value="ACETYL-COENZYME A CARBOXYLASE CARBOXYL TRANSFERASE SUBUNIT BETA, CHLOROPLASTIC"/>
    <property type="match status" value="1"/>
</dbReference>
<dbReference type="PANTHER" id="PTHR42995:SF5">
    <property type="entry name" value="ACETYL-COENZYME A CARBOXYLASE CARBOXYL TRANSFERASE SUBUNIT BETA, CHLOROPLASTIC"/>
    <property type="match status" value="1"/>
</dbReference>
<dbReference type="Pfam" id="PF01039">
    <property type="entry name" value="Carboxyl_trans"/>
    <property type="match status" value="1"/>
</dbReference>
<dbReference type="PRINTS" id="PR01070">
    <property type="entry name" value="ACCCTRFRASEB"/>
</dbReference>
<dbReference type="SUPFAM" id="SSF52096">
    <property type="entry name" value="ClpP/crotonase"/>
    <property type="match status" value="1"/>
</dbReference>
<dbReference type="PROSITE" id="PS50980">
    <property type="entry name" value="COA_CT_NTER"/>
    <property type="match status" value="1"/>
</dbReference>
<reference key="1">
    <citation type="submission" date="2006-01" db="EMBL/GenBank/DDBJ databases">
        <title>A comparison of the first two published chloroplast genomes in Asteraceae: Lactuca and Helianthus.</title>
        <authorList>
            <person name="Timme R.E."/>
            <person name="Kuehl J.V."/>
            <person name="Boore J.L."/>
            <person name="Jansen R.K."/>
        </authorList>
    </citation>
    <scope>NUCLEOTIDE SEQUENCE [LARGE SCALE GENOMIC DNA]</scope>
    <source>
        <strain>cv. HA383</strain>
    </source>
</reference>
<comment type="function">
    <text evidence="2">Component of the acetyl coenzyme A carboxylase (ACC) complex. Biotin carboxylase (BC) catalyzes the carboxylation of biotin on its carrier protein (BCCP) and then the CO(2) group is transferred by the transcarboxylase to acetyl-CoA to form malonyl-CoA.</text>
</comment>
<comment type="catalytic activity">
    <reaction evidence="2">
        <text>N(6)-carboxybiotinyl-L-lysyl-[protein] + acetyl-CoA = N(6)-biotinyl-L-lysyl-[protein] + malonyl-CoA</text>
        <dbReference type="Rhea" id="RHEA:54728"/>
        <dbReference type="Rhea" id="RHEA-COMP:10505"/>
        <dbReference type="Rhea" id="RHEA-COMP:10506"/>
        <dbReference type="ChEBI" id="CHEBI:57288"/>
        <dbReference type="ChEBI" id="CHEBI:57384"/>
        <dbReference type="ChEBI" id="CHEBI:83144"/>
        <dbReference type="ChEBI" id="CHEBI:83145"/>
        <dbReference type="EC" id="2.1.3.15"/>
    </reaction>
</comment>
<comment type="cofactor">
    <cofactor evidence="2">
        <name>Zn(2+)</name>
        <dbReference type="ChEBI" id="CHEBI:29105"/>
    </cofactor>
    <text evidence="2">Binds 1 zinc ion per subunit.</text>
</comment>
<comment type="pathway">
    <text evidence="2">Lipid metabolism; malonyl-CoA biosynthesis; malonyl-CoA from acetyl-CoA: step 1/1.</text>
</comment>
<comment type="subunit">
    <text evidence="1">Acetyl-CoA carboxylase is a heterohexamer composed of biotin carboxyl carrier protein, biotin carboxylase and 2 subunits each of ACCase subunit alpha and ACCase plastid-coded subunit beta (accD).</text>
</comment>
<comment type="subcellular location">
    <subcellularLocation>
        <location evidence="2">Plastid</location>
        <location evidence="2">Chloroplast stroma</location>
    </subcellularLocation>
</comment>
<comment type="similarity">
    <text evidence="2">Belongs to the AccD/PCCB family.</text>
</comment>
<sequence length="480" mass="54284">MKRWWLNSMLFKKEFEHRCRLSKSTSSLGPIENASESKDPNINDTDKNIQSWGGHDNYSNVDLFFGVKDLRNLISDDTFLVKDSNGDIYSLYFDIENHIFEIDNDHPELESSFYRNSSYLNNGSKSKNPEHDPYMNDTQYTWNNHINSCIDSYLQSQICIDSYIVSGSDNSSNNYISSSICGESGNSSKNEDARTSDPIIRESSTDLDVTQKYRHLWVQCENCYGLNYKKFFKSKMNLCEQCGYHLKMSSSDRIELSIDPGTWEPMDEDMVSLDPIEFHSEEEPYKNRIDSYQRKTGLTEAVQTGIGQLDGINVAIAVMDFQFMGGSMGSVVGEKITRLIEYATKEFLPLIIVCASGGARMQEGSLSLMQMAKISSALYDYQSNKKLFYVPILTSPTTGGVTASFGMLGDIIIAEPNAYIAFAGKRVIEQTLNKTVPDGSQAAEYLFQKGLFDLIVPRNPLKSVLSELFQLHTFFPLNQN</sequence>
<name>ACCD_HELAN</name>
<protein>
    <recommendedName>
        <fullName evidence="2">Acetyl-coenzyme A carboxylase carboxyl transferase subunit beta, chloroplastic</fullName>
        <shortName evidence="2">ACCase subunit beta</shortName>
        <shortName evidence="2">Acetyl-CoA carboxylase carboxyltransferase subunit beta</shortName>
        <ecNumber evidence="2">2.1.3.15</ecNumber>
    </recommendedName>
</protein>
<gene>
    <name evidence="2" type="primary">accD</name>
</gene>
<accession>Q1KXV0</accession>
<organism>
    <name type="scientific">Helianthus annuus</name>
    <name type="common">Common sunflower</name>
    <dbReference type="NCBI Taxonomy" id="4232"/>
    <lineage>
        <taxon>Eukaryota</taxon>
        <taxon>Viridiplantae</taxon>
        <taxon>Streptophyta</taxon>
        <taxon>Embryophyta</taxon>
        <taxon>Tracheophyta</taxon>
        <taxon>Spermatophyta</taxon>
        <taxon>Magnoliopsida</taxon>
        <taxon>eudicotyledons</taxon>
        <taxon>Gunneridae</taxon>
        <taxon>Pentapetalae</taxon>
        <taxon>asterids</taxon>
        <taxon>campanulids</taxon>
        <taxon>Asterales</taxon>
        <taxon>Asteraceae</taxon>
        <taxon>Asteroideae</taxon>
        <taxon>Heliantheae alliance</taxon>
        <taxon>Heliantheae</taxon>
        <taxon>Helianthus</taxon>
    </lineage>
</organism>
<feature type="chain" id="PRO_0000359143" description="Acetyl-coenzyme A carboxylase carboxyl transferase subunit beta, chloroplastic">
    <location>
        <begin position="1"/>
        <end position="480"/>
    </location>
</feature>
<feature type="domain" description="CoA carboxyltransferase N-terminal" evidence="3">
    <location>
        <begin position="216"/>
        <end position="480"/>
    </location>
</feature>
<feature type="zinc finger region" description="C4-type" evidence="2">
    <location>
        <begin position="220"/>
        <end position="242"/>
    </location>
</feature>
<feature type="region of interest" description="Disordered" evidence="4">
    <location>
        <begin position="25"/>
        <end position="48"/>
    </location>
</feature>
<feature type="compositionally biased region" description="Basic and acidic residues" evidence="4">
    <location>
        <begin position="35"/>
        <end position="47"/>
    </location>
</feature>
<feature type="binding site" evidence="2">
    <location>
        <position position="220"/>
    </location>
    <ligand>
        <name>Zn(2+)</name>
        <dbReference type="ChEBI" id="CHEBI:29105"/>
    </ligand>
</feature>
<feature type="binding site" evidence="2">
    <location>
        <position position="223"/>
    </location>
    <ligand>
        <name>Zn(2+)</name>
        <dbReference type="ChEBI" id="CHEBI:29105"/>
    </ligand>
</feature>
<feature type="binding site" evidence="2">
    <location>
        <position position="239"/>
    </location>
    <ligand>
        <name>Zn(2+)</name>
        <dbReference type="ChEBI" id="CHEBI:29105"/>
    </ligand>
</feature>
<feature type="binding site" evidence="2">
    <location>
        <position position="242"/>
    </location>
    <ligand>
        <name>Zn(2+)</name>
        <dbReference type="ChEBI" id="CHEBI:29105"/>
    </ligand>
</feature>